<proteinExistence type="inferred from homology"/>
<comment type="function">
    <text evidence="1">Regulatory subunit of calcineurin, a calcium-dependent, calmodulin stimulated protein phosphatase. Confers calcium sensitivity (By similarity).</text>
</comment>
<comment type="subunit">
    <text evidence="1">Composed of a catalytic subunit (A) and a regulatory subunit (B).</text>
</comment>
<comment type="miscellaneous">
    <text evidence="1">This protein has four functional calcium-binding sites.</text>
</comment>
<comment type="similarity">
    <text evidence="3">Belongs to the calcineurin regulatory subunit family.</text>
</comment>
<sequence length="177" mass="20057">MGTNTSSLRPEEVEEMQKGTNFTQKEIKKLYKRFKKLDKDGNGTISKDEFLMIPELAVNPLVKRVISIFDENGDGSVNFKEFIAALSVFNAQGDKQRKLEFAFKVYDIDGDGYISNGELFTVLKMMVGNNLSDVQLQQIVDKTILEADEDGDGKISFEEFAKTLSHQDLENKMTIRL</sequence>
<evidence type="ECO:0000250" key="1"/>
<evidence type="ECO:0000255" key="2">
    <source>
        <dbReference type="PROSITE-ProRule" id="PRU00448"/>
    </source>
</evidence>
<evidence type="ECO:0000305" key="3"/>
<organism>
    <name type="scientific">Naegleria gruberi</name>
    <name type="common">Amoeba</name>
    <dbReference type="NCBI Taxonomy" id="5762"/>
    <lineage>
        <taxon>Eukaryota</taxon>
        <taxon>Discoba</taxon>
        <taxon>Heterolobosea</taxon>
        <taxon>Tetramitia</taxon>
        <taxon>Eutetramitia</taxon>
        <taxon>Vahlkampfiidae</taxon>
        <taxon>Naegleria</taxon>
    </lineage>
</organism>
<keyword id="KW-0106">Calcium</keyword>
<keyword id="KW-0479">Metal-binding</keyword>
<keyword id="KW-0677">Repeat</keyword>
<feature type="chain" id="PRO_0000073487" description="Calcineurin subunit B">
    <location>
        <begin position="1"/>
        <end position="177"/>
    </location>
</feature>
<feature type="domain" description="EF-hand 1" evidence="2">
    <location>
        <begin position="25"/>
        <end position="60"/>
    </location>
</feature>
<feature type="domain" description="EF-hand 2" evidence="2">
    <location>
        <begin position="62"/>
        <end position="92"/>
    </location>
</feature>
<feature type="domain" description="EF-hand 3" evidence="2">
    <location>
        <begin position="94"/>
        <end position="129"/>
    </location>
</feature>
<feature type="domain" description="EF-hand 4" evidence="2">
    <location>
        <begin position="135"/>
        <end position="170"/>
    </location>
</feature>
<feature type="binding site" evidence="2">
    <location>
        <position position="38"/>
    </location>
    <ligand>
        <name>Ca(2+)</name>
        <dbReference type="ChEBI" id="CHEBI:29108"/>
        <label>1</label>
    </ligand>
</feature>
<feature type="binding site" evidence="2">
    <location>
        <position position="40"/>
    </location>
    <ligand>
        <name>Ca(2+)</name>
        <dbReference type="ChEBI" id="CHEBI:29108"/>
        <label>1</label>
    </ligand>
</feature>
<feature type="binding site" evidence="2">
    <location>
        <position position="42"/>
    </location>
    <ligand>
        <name>Ca(2+)</name>
        <dbReference type="ChEBI" id="CHEBI:29108"/>
        <label>1</label>
    </ligand>
</feature>
<feature type="binding site" evidence="2">
    <location>
        <position position="44"/>
    </location>
    <ligand>
        <name>Ca(2+)</name>
        <dbReference type="ChEBI" id="CHEBI:29108"/>
        <label>1</label>
    </ligand>
</feature>
<feature type="binding site" evidence="2">
    <location>
        <position position="49"/>
    </location>
    <ligand>
        <name>Ca(2+)</name>
        <dbReference type="ChEBI" id="CHEBI:29108"/>
        <label>1</label>
    </ligand>
</feature>
<feature type="binding site" evidence="2">
    <location>
        <position position="70"/>
    </location>
    <ligand>
        <name>Ca(2+)</name>
        <dbReference type="ChEBI" id="CHEBI:29108"/>
        <label>2</label>
    </ligand>
</feature>
<feature type="binding site" evidence="2">
    <location>
        <position position="72"/>
    </location>
    <ligand>
        <name>Ca(2+)</name>
        <dbReference type="ChEBI" id="CHEBI:29108"/>
        <label>2</label>
    </ligand>
</feature>
<feature type="binding site" evidence="2">
    <location>
        <position position="74"/>
    </location>
    <ligand>
        <name>Ca(2+)</name>
        <dbReference type="ChEBI" id="CHEBI:29108"/>
        <label>2</label>
    </ligand>
</feature>
<feature type="binding site" evidence="2">
    <location>
        <position position="76"/>
    </location>
    <ligand>
        <name>Ca(2+)</name>
        <dbReference type="ChEBI" id="CHEBI:29108"/>
        <label>2</label>
    </ligand>
</feature>
<feature type="binding site" evidence="2">
    <location>
        <position position="81"/>
    </location>
    <ligand>
        <name>Ca(2+)</name>
        <dbReference type="ChEBI" id="CHEBI:29108"/>
        <label>2</label>
    </ligand>
</feature>
<feature type="binding site" evidence="2">
    <location>
        <position position="107"/>
    </location>
    <ligand>
        <name>Ca(2+)</name>
        <dbReference type="ChEBI" id="CHEBI:29108"/>
        <label>3</label>
    </ligand>
</feature>
<feature type="binding site" evidence="2">
    <location>
        <position position="109"/>
    </location>
    <ligand>
        <name>Ca(2+)</name>
        <dbReference type="ChEBI" id="CHEBI:29108"/>
        <label>3</label>
    </ligand>
</feature>
<feature type="binding site" evidence="2">
    <location>
        <position position="111"/>
    </location>
    <ligand>
        <name>Ca(2+)</name>
        <dbReference type="ChEBI" id="CHEBI:29108"/>
        <label>3</label>
    </ligand>
</feature>
<feature type="binding site" evidence="2">
    <location>
        <position position="113"/>
    </location>
    <ligand>
        <name>Ca(2+)</name>
        <dbReference type="ChEBI" id="CHEBI:29108"/>
        <label>3</label>
    </ligand>
</feature>
<feature type="binding site" evidence="2">
    <location>
        <position position="118"/>
    </location>
    <ligand>
        <name>Ca(2+)</name>
        <dbReference type="ChEBI" id="CHEBI:29108"/>
        <label>3</label>
    </ligand>
</feature>
<feature type="binding site" evidence="2">
    <location>
        <position position="148"/>
    </location>
    <ligand>
        <name>Ca(2+)</name>
        <dbReference type="ChEBI" id="CHEBI:29108"/>
        <label>4</label>
    </ligand>
</feature>
<feature type="binding site" evidence="2">
    <location>
        <position position="150"/>
    </location>
    <ligand>
        <name>Ca(2+)</name>
        <dbReference type="ChEBI" id="CHEBI:29108"/>
        <label>4</label>
    </ligand>
</feature>
<feature type="binding site" evidence="2">
    <location>
        <position position="152"/>
    </location>
    <ligand>
        <name>Ca(2+)</name>
        <dbReference type="ChEBI" id="CHEBI:29108"/>
        <label>4</label>
    </ligand>
</feature>
<feature type="binding site" evidence="2">
    <location>
        <position position="154"/>
    </location>
    <ligand>
        <name>Ca(2+)</name>
        <dbReference type="ChEBI" id="CHEBI:29108"/>
        <label>4</label>
    </ligand>
</feature>
<feature type="binding site" evidence="2">
    <location>
        <position position="159"/>
    </location>
    <ligand>
        <name>Ca(2+)</name>
        <dbReference type="ChEBI" id="CHEBI:29108"/>
        <label>4</label>
    </ligand>
</feature>
<accession>P42322</accession>
<gene>
    <name type="primary">CNB1</name>
</gene>
<protein>
    <recommendedName>
        <fullName>Calcineurin subunit B</fullName>
    </recommendedName>
    <alternativeName>
        <fullName>Calcineurin regulatory subunit</fullName>
    </alternativeName>
    <alternativeName>
        <fullName>Protein phosphatase 2B regulatory subunit</fullName>
    </alternativeName>
</protein>
<name>CANB1_NAEGR</name>
<reference key="1">
    <citation type="journal article" date="1995" name="Gene">
        <title>A calcineurin-B-encoding gene expressed during differentiation of the amoeboflagellate Naegleria gruberi contains two introns.</title>
        <authorList>
            <person name="Remillard S.P."/>
            <person name="Lai E.Y."/>
            <person name="Levy Y.Y."/>
            <person name="Fulton C."/>
        </authorList>
    </citation>
    <scope>NUCLEOTIDE SEQUENCE [GENOMIC DNA]</scope>
    <source>
        <strain>ATCC 30223 / NEG</strain>
    </source>
</reference>
<dbReference type="EMBL" id="U04380">
    <property type="protein sequence ID" value="AAA81896.1"/>
    <property type="molecule type" value="Genomic_DNA"/>
</dbReference>
<dbReference type="RefSeq" id="XP_002680632.1">
    <property type="nucleotide sequence ID" value="XM_002680586.1"/>
</dbReference>
<dbReference type="SMR" id="P42322"/>
<dbReference type="KEGG" id="ngr:NAEGRDRAFT_35722"/>
<dbReference type="VEuPathDB" id="AmoebaDB:NAEGRDRAFT_35722"/>
<dbReference type="eggNOG" id="KOG0034">
    <property type="taxonomic scope" value="Eukaryota"/>
</dbReference>
<dbReference type="OMA" id="DTNFDRD"/>
<dbReference type="OrthoDB" id="191686at2759"/>
<dbReference type="GO" id="GO:0005509">
    <property type="term" value="F:calcium ion binding"/>
    <property type="evidence" value="ECO:0007669"/>
    <property type="project" value="InterPro"/>
</dbReference>
<dbReference type="CDD" id="cd00051">
    <property type="entry name" value="EFh"/>
    <property type="match status" value="1"/>
</dbReference>
<dbReference type="FunFam" id="1.10.238.10:FF:000001">
    <property type="entry name" value="Calmodulin 1"/>
    <property type="match status" value="1"/>
</dbReference>
<dbReference type="Gene3D" id="1.10.238.10">
    <property type="entry name" value="EF-hand"/>
    <property type="match status" value="1"/>
</dbReference>
<dbReference type="InterPro" id="IPR011992">
    <property type="entry name" value="EF-hand-dom_pair"/>
</dbReference>
<dbReference type="InterPro" id="IPR018247">
    <property type="entry name" value="EF_Hand_1_Ca_BS"/>
</dbReference>
<dbReference type="InterPro" id="IPR002048">
    <property type="entry name" value="EF_hand_dom"/>
</dbReference>
<dbReference type="PANTHER" id="PTHR45942">
    <property type="entry name" value="PROTEIN PHOSPATASE 3 REGULATORY SUBUNIT B ALPHA ISOFORM TYPE 1"/>
    <property type="match status" value="1"/>
</dbReference>
<dbReference type="Pfam" id="PF13499">
    <property type="entry name" value="EF-hand_7"/>
    <property type="match status" value="2"/>
</dbReference>
<dbReference type="PRINTS" id="PR00450">
    <property type="entry name" value="RECOVERIN"/>
</dbReference>
<dbReference type="SMART" id="SM00054">
    <property type="entry name" value="EFh"/>
    <property type="match status" value="4"/>
</dbReference>
<dbReference type="SUPFAM" id="SSF47473">
    <property type="entry name" value="EF-hand"/>
    <property type="match status" value="1"/>
</dbReference>
<dbReference type="PROSITE" id="PS00018">
    <property type="entry name" value="EF_HAND_1"/>
    <property type="match status" value="4"/>
</dbReference>
<dbReference type="PROSITE" id="PS50222">
    <property type="entry name" value="EF_HAND_2"/>
    <property type="match status" value="4"/>
</dbReference>